<accession>A0A023UBX6</accession>
<reference key="1">
    <citation type="journal article" date="2014" name="Toxicon">
        <title>The molecular diversity of toxin gene families in lethal Amanita mushrooms.</title>
        <authorList>
            <person name="Li P."/>
            <person name="Deng W."/>
            <person name="Li T."/>
        </authorList>
    </citation>
    <scope>NUCLEOTIDE SEQUENCE [GENOMIC DNA]</scope>
    <scope>FUNCTION</scope>
</reference>
<organism>
    <name type="scientific">Amanita exitialis</name>
    <name type="common">Guangzhou destroying angel</name>
    <dbReference type="NCBI Taxonomy" id="262245"/>
    <lineage>
        <taxon>Eukaryota</taxon>
        <taxon>Fungi</taxon>
        <taxon>Dikarya</taxon>
        <taxon>Basidiomycota</taxon>
        <taxon>Agaricomycotina</taxon>
        <taxon>Agaricomycetes</taxon>
        <taxon>Agaricomycetidae</taxon>
        <taxon>Agaricales</taxon>
        <taxon>Pluteineae</taxon>
        <taxon>Amanitaceae</taxon>
        <taxon>Amanita</taxon>
    </lineage>
</organism>
<gene>
    <name evidence="4" type="primary">PHA3</name>
    <name evidence="4" type="synonym">PHA2</name>
    <name evidence="4" type="synonym">PHA4</name>
</gene>
<evidence type="ECO:0000250" key="1">
    <source>
        <dbReference type="UniProtKB" id="A0A067SLB9"/>
    </source>
</evidence>
<evidence type="ECO:0000250" key="2">
    <source>
        <dbReference type="UniProtKB" id="A8W7M4"/>
    </source>
</evidence>
<evidence type="ECO:0000250" key="3">
    <source>
        <dbReference type="UniProtKB" id="P85421"/>
    </source>
</evidence>
<evidence type="ECO:0000303" key="4">
    <source>
    </source>
</evidence>
<evidence type="ECO:0000305" key="5"/>
<evidence type="ECO:0000305" key="6">
    <source>
    </source>
</evidence>
<comment type="function">
    <text evidence="6">Toxin that belongs to the bicyclic heptapeptides called phallotoxins (PubMed:24613547). Although structurally related to amatoxins, phallotoxins have a different mode of action, which is the stabilization of F-actin (PubMed:24613547). Phallotoxins are poisonous when administered parenterally, but not orally because of poor absorption (PubMed:24613547).</text>
</comment>
<comment type="PTM">
    <text evidence="1">Processed by the macrocyclase-peptidase enzyme POPB to yield a toxic cyclic heptapeptide (By similarity). POPB first removes 10 residues from the N-terminus (By similarity). Conformational trapping of the remaining peptide forces the enzyme to release this intermediate rather than proceed to macrocyclization (By similarity). The enzyme rebinds the remaining peptide in a different conformation and catalyzes macrocyclization of the N-terminal 7 residues (By similarity).</text>
</comment>
<comment type="similarity">
    <text evidence="5">Belongs to the MSDIN fungal toxin family.</text>
</comment>
<dbReference type="EMBL" id="KC778564">
    <property type="protein sequence ID" value="AGO98220.1"/>
    <property type="molecule type" value="Genomic_DNA"/>
</dbReference>
<dbReference type="EMBL" id="KC778565">
    <property type="protein sequence ID" value="AGO98221.1"/>
    <property type="molecule type" value="Genomic_DNA"/>
</dbReference>
<dbReference type="EMBL" id="KC778566">
    <property type="protein sequence ID" value="AGO98222.1"/>
    <property type="molecule type" value="Genomic_DNA"/>
</dbReference>
<dbReference type="EMBL" id="KF546293">
    <property type="protein sequence ID" value="AHX98317.1"/>
    <property type="molecule type" value="Genomic_DNA"/>
</dbReference>
<dbReference type="EMBL" id="KF546294">
    <property type="protein sequence ID" value="AHX98318.1"/>
    <property type="molecule type" value="Genomic_DNA"/>
</dbReference>
<dbReference type="EMBL" id="KF546295">
    <property type="protein sequence ID" value="AHX98319.1"/>
    <property type="molecule type" value="Genomic_DNA"/>
</dbReference>
<dbReference type="GO" id="GO:0090729">
    <property type="term" value="F:toxin activity"/>
    <property type="evidence" value="ECO:0007669"/>
    <property type="project" value="UniProtKB-KW"/>
</dbReference>
<dbReference type="InterPro" id="IPR027582">
    <property type="entry name" value="Amanitin/phalloidin"/>
</dbReference>
<dbReference type="NCBIfam" id="TIGR04309">
    <property type="entry name" value="amanitin"/>
    <property type="match status" value="1"/>
</dbReference>
<name>PHAT1_AMAEX</name>
<sequence>PAWLVDCPCVGDDVNRLLTRGER</sequence>
<proteinExistence type="inferred from homology"/>
<keyword id="KW-0883">Thioether bond</keyword>
<keyword id="KW-0800">Toxin</keyword>
<protein>
    <recommendedName>
        <fullName evidence="4">Phallacidin proprotein 1</fullName>
    </recommendedName>
    <component>
        <recommendedName>
            <fullName evidence="4">Phallacidin</fullName>
        </recommendedName>
    </component>
</protein>
<feature type="propeptide" id="PRO_0000443614" evidence="2">
    <location>
        <position position="1"/>
    </location>
</feature>
<feature type="peptide" id="PRO_0000443615" description="Phallacidin" evidence="2">
    <location>
        <begin position="2"/>
        <end position="8"/>
    </location>
</feature>
<feature type="propeptide" id="PRO_0000443616" evidence="2">
    <location>
        <begin position="9"/>
        <end position="23"/>
    </location>
</feature>
<feature type="cross-link" description="Cyclopeptide (Ala-Pro)" evidence="2">
    <location>
        <begin position="2"/>
        <end position="8"/>
    </location>
</feature>
<feature type="cross-link" description="2'-cysteinyl-6'-hydroxytryptophan sulfoxide (Trp-Cys)" evidence="3">
    <location>
        <begin position="3"/>
        <end position="7"/>
    </location>
</feature>
<feature type="non-terminal residue" evidence="5">
    <location>
        <position position="1"/>
    </location>
</feature>